<keyword id="KW-1015">Disulfide bond</keyword>
<keyword id="KW-0249">Electron transport</keyword>
<keyword id="KW-0676">Redox-active center</keyword>
<keyword id="KW-1185">Reference proteome</keyword>
<keyword id="KW-0813">Transport</keyword>
<gene>
    <name type="ordered locus">slr1562</name>
</gene>
<proteinExistence type="inferred from homology"/>
<evidence type="ECO:0000250" key="1"/>
<evidence type="ECO:0000255" key="2">
    <source>
        <dbReference type="PROSITE-ProRule" id="PRU00686"/>
    </source>
</evidence>
<evidence type="ECO:0000305" key="3"/>
<name>GLRX1_SYNY3</name>
<protein>
    <recommendedName>
        <fullName>Probable glutaredoxin slr1562</fullName>
    </recommendedName>
</protein>
<reference key="1">
    <citation type="journal article" date="1996" name="DNA Res.">
        <title>Sequence analysis of the genome of the unicellular cyanobacterium Synechocystis sp. strain PCC6803. II. Sequence determination of the entire genome and assignment of potential protein-coding regions.</title>
        <authorList>
            <person name="Kaneko T."/>
            <person name="Sato S."/>
            <person name="Kotani H."/>
            <person name="Tanaka A."/>
            <person name="Asamizu E."/>
            <person name="Nakamura Y."/>
            <person name="Miyajima N."/>
            <person name="Hirosawa M."/>
            <person name="Sugiura M."/>
            <person name="Sasamoto S."/>
            <person name="Kimura T."/>
            <person name="Hosouchi T."/>
            <person name="Matsuno A."/>
            <person name="Muraki A."/>
            <person name="Nakazaki N."/>
            <person name="Naruo K."/>
            <person name="Okumura S."/>
            <person name="Shimpo S."/>
            <person name="Takeuchi C."/>
            <person name="Wada T."/>
            <person name="Watanabe A."/>
            <person name="Yamada M."/>
            <person name="Yasuda M."/>
            <person name="Tabata S."/>
        </authorList>
    </citation>
    <scope>NUCLEOTIDE SEQUENCE [LARGE SCALE GENOMIC DNA]</scope>
    <source>
        <strain>ATCC 27184 / PCC 6803 / Kazusa</strain>
    </source>
</reference>
<organism>
    <name type="scientific">Synechocystis sp. (strain ATCC 27184 / PCC 6803 / Kazusa)</name>
    <dbReference type="NCBI Taxonomy" id="1111708"/>
    <lineage>
        <taxon>Bacteria</taxon>
        <taxon>Bacillati</taxon>
        <taxon>Cyanobacteriota</taxon>
        <taxon>Cyanophyceae</taxon>
        <taxon>Synechococcales</taxon>
        <taxon>Merismopediaceae</taxon>
        <taxon>Synechocystis</taxon>
    </lineage>
</organism>
<accession>P74593</accession>
<feature type="chain" id="PRO_0000141597" description="Probable glutaredoxin slr1562">
    <location>
        <begin position="1"/>
        <end position="109"/>
    </location>
</feature>
<feature type="domain" description="Glutaredoxin" evidence="2">
    <location>
        <begin position="11"/>
        <end position="109"/>
    </location>
</feature>
<feature type="disulfide bond" description="Redox-active" evidence="1">
    <location>
        <begin position="31"/>
        <end position="34"/>
    </location>
</feature>
<comment type="function">
    <text evidence="1">Has a glutathione-disulfide oxidoreductase activity in the presence of NADPH and glutathione reductase. Reduces low molecular weight disulfides and proteins (By similarity).</text>
</comment>
<comment type="similarity">
    <text evidence="3">Belongs to the glutaredoxin family.</text>
</comment>
<sequence>MANLFNWLPLLSGRQADGIKAKVEIYTWQTCPFCIRAKLLLWWKGVKFIEYKIDGDDQARQAMAARAEGRRTVPQIFVNDQGIGGCDQLYGLDSRGQLDPLLATPPNPA</sequence>
<dbReference type="EMBL" id="BA000022">
    <property type="protein sequence ID" value="BAA18701.1"/>
    <property type="molecule type" value="Genomic_DNA"/>
</dbReference>
<dbReference type="PIR" id="S76789">
    <property type="entry name" value="S76789"/>
</dbReference>
<dbReference type="SMR" id="P74593"/>
<dbReference type="IntAct" id="P74593">
    <property type="interactions" value="2"/>
</dbReference>
<dbReference type="STRING" id="1148.gene:10500473"/>
<dbReference type="PaxDb" id="1148-1653790"/>
<dbReference type="EnsemblBacteria" id="BAA18701">
    <property type="protein sequence ID" value="BAA18701"/>
    <property type="gene ID" value="BAA18701"/>
</dbReference>
<dbReference type="KEGG" id="syn:slr1562"/>
<dbReference type="eggNOG" id="COG0695">
    <property type="taxonomic scope" value="Bacteria"/>
</dbReference>
<dbReference type="InParanoid" id="P74593"/>
<dbReference type="PhylomeDB" id="P74593"/>
<dbReference type="Proteomes" id="UP000001425">
    <property type="component" value="Chromosome"/>
</dbReference>
<dbReference type="GO" id="GO:0005737">
    <property type="term" value="C:cytoplasm"/>
    <property type="evidence" value="ECO:0000318"/>
    <property type="project" value="GO_Central"/>
</dbReference>
<dbReference type="GO" id="GO:0015038">
    <property type="term" value="F:glutathione disulfide oxidoreductase activity"/>
    <property type="evidence" value="ECO:0000318"/>
    <property type="project" value="GO_Central"/>
</dbReference>
<dbReference type="GO" id="GO:0045454">
    <property type="term" value="P:cell redox homeostasis"/>
    <property type="evidence" value="ECO:0007669"/>
    <property type="project" value="InterPro"/>
</dbReference>
<dbReference type="GO" id="GO:0034599">
    <property type="term" value="P:cellular response to oxidative stress"/>
    <property type="evidence" value="ECO:0000318"/>
    <property type="project" value="GO_Central"/>
</dbReference>
<dbReference type="CDD" id="cd03418">
    <property type="entry name" value="GRX_GRXb_1_3_like"/>
    <property type="match status" value="1"/>
</dbReference>
<dbReference type="FunFam" id="3.40.30.10:FF:000018">
    <property type="entry name" value="Glutaredoxin"/>
    <property type="match status" value="1"/>
</dbReference>
<dbReference type="Gene3D" id="3.40.30.10">
    <property type="entry name" value="Glutaredoxin"/>
    <property type="match status" value="1"/>
</dbReference>
<dbReference type="InterPro" id="IPR011767">
    <property type="entry name" value="GLR_AS"/>
</dbReference>
<dbReference type="InterPro" id="IPR002109">
    <property type="entry name" value="Glutaredoxin"/>
</dbReference>
<dbReference type="InterPro" id="IPR014025">
    <property type="entry name" value="Glutaredoxin_subgr"/>
</dbReference>
<dbReference type="InterPro" id="IPR011900">
    <property type="entry name" value="GRX_bact"/>
</dbReference>
<dbReference type="InterPro" id="IPR036249">
    <property type="entry name" value="Thioredoxin-like_sf"/>
</dbReference>
<dbReference type="NCBIfam" id="TIGR02181">
    <property type="entry name" value="GRX_bact"/>
    <property type="match status" value="1"/>
</dbReference>
<dbReference type="PANTHER" id="PTHR45694">
    <property type="entry name" value="GLUTAREDOXIN 2"/>
    <property type="match status" value="1"/>
</dbReference>
<dbReference type="PANTHER" id="PTHR45694:SF18">
    <property type="entry name" value="GLUTAREDOXIN-1-RELATED"/>
    <property type="match status" value="1"/>
</dbReference>
<dbReference type="Pfam" id="PF00462">
    <property type="entry name" value="Glutaredoxin"/>
    <property type="match status" value="1"/>
</dbReference>
<dbReference type="PRINTS" id="PR00160">
    <property type="entry name" value="GLUTAREDOXIN"/>
</dbReference>
<dbReference type="SUPFAM" id="SSF52833">
    <property type="entry name" value="Thioredoxin-like"/>
    <property type="match status" value="1"/>
</dbReference>
<dbReference type="PROSITE" id="PS00195">
    <property type="entry name" value="GLUTAREDOXIN_1"/>
    <property type="match status" value="1"/>
</dbReference>
<dbReference type="PROSITE" id="PS51354">
    <property type="entry name" value="GLUTAREDOXIN_2"/>
    <property type="match status" value="1"/>
</dbReference>